<comment type="function">
    <text evidence="1">Cleaves peptides in various proteins in a process that requires ATP hydrolysis. Has a chymotrypsin-like activity. Plays a major role in the degradation of misfolded proteins.</text>
</comment>
<comment type="catalytic activity">
    <reaction evidence="1">
        <text>Hydrolysis of proteins to small peptides in the presence of ATP and magnesium. alpha-casein is the usual test substrate. In the absence of ATP, only oligopeptides shorter than five residues are hydrolyzed (such as succinyl-Leu-Tyr-|-NHMec, and Leu-Tyr-Leu-|-Tyr-Trp, in which cleavage of the -Tyr-|-Leu- and -Tyr-|-Trp bonds also occurs).</text>
        <dbReference type="EC" id="3.4.21.92"/>
    </reaction>
</comment>
<comment type="subunit">
    <text>Component of the chloroplastic Clp protease core complex.</text>
</comment>
<comment type="subcellular location">
    <subcellularLocation>
        <location evidence="1">Plastid</location>
        <location evidence="1">Chloroplast stroma</location>
    </subcellularLocation>
</comment>
<comment type="similarity">
    <text evidence="1">Belongs to the peptidase S14 family.</text>
</comment>
<reference key="1">
    <citation type="journal article" date="2000" name="Nature">
        <title>Ancestral chloroplast genome in Mesostigma viride reveals an early branch of green plant evolution.</title>
        <authorList>
            <person name="Lemieux C."/>
            <person name="Otis C."/>
            <person name="Turmel M."/>
        </authorList>
    </citation>
    <scope>NUCLEOTIDE SEQUENCE [LARGE SCALE GENOMIC DNA]</scope>
    <source>
        <strain>NIES-296 / KY-14 / CCMP 2046</strain>
    </source>
</reference>
<geneLocation type="chloroplast"/>
<organism>
    <name type="scientific">Mesostigma viride</name>
    <name type="common">Green alga</name>
    <dbReference type="NCBI Taxonomy" id="41882"/>
    <lineage>
        <taxon>Eukaryota</taxon>
        <taxon>Viridiplantae</taxon>
        <taxon>Streptophyta</taxon>
        <taxon>Mesostigmatophyceae</taxon>
        <taxon>Mesostigmatales</taxon>
        <taxon>Mesostigmataceae</taxon>
        <taxon>Mesostigma</taxon>
    </lineage>
</organism>
<dbReference type="EC" id="3.4.21.92" evidence="1"/>
<dbReference type="EMBL" id="AF166114">
    <property type="protein sequence ID" value="AAF43793.1"/>
    <property type="molecule type" value="Genomic_DNA"/>
</dbReference>
<dbReference type="RefSeq" id="NP_038352.1">
    <property type="nucleotide sequence ID" value="NC_002186.1"/>
</dbReference>
<dbReference type="SMR" id="Q9MUV8"/>
<dbReference type="MEROPS" id="S14.002"/>
<dbReference type="GeneID" id="800909"/>
<dbReference type="GO" id="GO:0009570">
    <property type="term" value="C:chloroplast stroma"/>
    <property type="evidence" value="ECO:0007669"/>
    <property type="project" value="UniProtKB-SubCell"/>
</dbReference>
<dbReference type="GO" id="GO:0009368">
    <property type="term" value="C:endopeptidase Clp complex"/>
    <property type="evidence" value="ECO:0007669"/>
    <property type="project" value="TreeGrafter"/>
</dbReference>
<dbReference type="GO" id="GO:0004176">
    <property type="term" value="F:ATP-dependent peptidase activity"/>
    <property type="evidence" value="ECO:0007669"/>
    <property type="project" value="InterPro"/>
</dbReference>
<dbReference type="GO" id="GO:0051117">
    <property type="term" value="F:ATPase binding"/>
    <property type="evidence" value="ECO:0007669"/>
    <property type="project" value="TreeGrafter"/>
</dbReference>
<dbReference type="GO" id="GO:0004252">
    <property type="term" value="F:serine-type endopeptidase activity"/>
    <property type="evidence" value="ECO:0007669"/>
    <property type="project" value="UniProtKB-UniRule"/>
</dbReference>
<dbReference type="GO" id="GO:0006515">
    <property type="term" value="P:protein quality control for misfolded or incompletely synthesized proteins"/>
    <property type="evidence" value="ECO:0007669"/>
    <property type="project" value="TreeGrafter"/>
</dbReference>
<dbReference type="CDD" id="cd07017">
    <property type="entry name" value="S14_ClpP_2"/>
    <property type="match status" value="1"/>
</dbReference>
<dbReference type="Gene3D" id="3.90.226.10">
    <property type="entry name" value="2-enoyl-CoA Hydratase, Chain A, domain 1"/>
    <property type="match status" value="1"/>
</dbReference>
<dbReference type="HAMAP" id="MF_00444">
    <property type="entry name" value="ClpP"/>
    <property type="match status" value="1"/>
</dbReference>
<dbReference type="InterPro" id="IPR001907">
    <property type="entry name" value="ClpP"/>
</dbReference>
<dbReference type="InterPro" id="IPR029045">
    <property type="entry name" value="ClpP/crotonase-like_dom_sf"/>
</dbReference>
<dbReference type="InterPro" id="IPR023562">
    <property type="entry name" value="ClpP/TepA"/>
</dbReference>
<dbReference type="InterPro" id="IPR033135">
    <property type="entry name" value="ClpP_His_AS"/>
</dbReference>
<dbReference type="InterPro" id="IPR018215">
    <property type="entry name" value="ClpP_Ser_AS"/>
</dbReference>
<dbReference type="PANTHER" id="PTHR10381">
    <property type="entry name" value="ATP-DEPENDENT CLP PROTEASE PROTEOLYTIC SUBUNIT"/>
    <property type="match status" value="1"/>
</dbReference>
<dbReference type="PANTHER" id="PTHR10381:SF15">
    <property type="entry name" value="CHLOROPLASTIC ATP-DEPENDENT CLP PROTEASE PROTEOLYTIC SUBUNIT 1"/>
    <property type="match status" value="1"/>
</dbReference>
<dbReference type="Pfam" id="PF00574">
    <property type="entry name" value="CLP_protease"/>
    <property type="match status" value="1"/>
</dbReference>
<dbReference type="PRINTS" id="PR00127">
    <property type="entry name" value="CLPPROTEASEP"/>
</dbReference>
<dbReference type="SUPFAM" id="SSF52096">
    <property type="entry name" value="ClpP/crotonase"/>
    <property type="match status" value="1"/>
</dbReference>
<dbReference type="PROSITE" id="PS00382">
    <property type="entry name" value="CLP_PROTEASE_HIS"/>
    <property type="match status" value="1"/>
</dbReference>
<dbReference type="PROSITE" id="PS00381">
    <property type="entry name" value="CLP_PROTEASE_SER"/>
    <property type="match status" value="1"/>
</dbReference>
<gene>
    <name evidence="1" type="primary">clpP</name>
</gene>
<evidence type="ECO:0000255" key="1">
    <source>
        <dbReference type="HAMAP-Rule" id="MF_00444"/>
    </source>
</evidence>
<sequence length="229" mass="25717">MPIGIPKVAYRIPGEAVSTYVDVYNRLYRERILFLGEDLDDEVANQLIGVMVFLNSEDDTKGIFFYINSPGGSMNAGLGVYDMIQHVNVDVTTICMGLAASMASFILAGGTPGQRLMFPHARVMLHQPMGGNGGKAKYMVEESVEVKRLRELIAHLYVKRTGQSLEKIRKDMNRDNFMRPRQAKEYGLIDHMVTNVNELDELDKQSNDLKKLGKVNLTNIETSNKSELK</sequence>
<proteinExistence type="inferred from homology"/>
<keyword id="KW-0150">Chloroplast</keyword>
<keyword id="KW-0378">Hydrolase</keyword>
<keyword id="KW-0934">Plastid</keyword>
<keyword id="KW-0645">Protease</keyword>
<keyword id="KW-0720">Serine protease</keyword>
<protein>
    <recommendedName>
        <fullName evidence="1">ATP-dependent Clp protease proteolytic subunit</fullName>
        <ecNumber evidence="1">3.4.21.92</ecNumber>
    </recommendedName>
    <alternativeName>
        <fullName evidence="1">Endopeptidase Clp</fullName>
    </alternativeName>
</protein>
<accession>Q9MUV8</accession>
<name>CLPP_MESVI</name>
<feature type="chain" id="PRO_0000179745" description="ATP-dependent Clp protease proteolytic subunit">
    <location>
        <begin position="1"/>
        <end position="229"/>
    </location>
</feature>
<feature type="active site" description="Nucleophile" evidence="1">
    <location>
        <position position="101"/>
    </location>
</feature>
<feature type="active site" evidence="1">
    <location>
        <position position="126"/>
    </location>
</feature>